<dbReference type="EMBL" id="U27569">
    <property type="protein sequence ID" value="AAA97576.1"/>
    <property type="molecule type" value="mRNA"/>
</dbReference>
<dbReference type="SMR" id="P62883"/>
<dbReference type="GO" id="GO:1990904">
    <property type="term" value="C:ribonucleoprotein complex"/>
    <property type="evidence" value="ECO:0007669"/>
    <property type="project" value="UniProtKB-KW"/>
</dbReference>
<dbReference type="GO" id="GO:0005840">
    <property type="term" value="C:ribosome"/>
    <property type="evidence" value="ECO:0007669"/>
    <property type="project" value="UniProtKB-KW"/>
</dbReference>
<dbReference type="GO" id="GO:0043022">
    <property type="term" value="F:ribosome binding"/>
    <property type="evidence" value="ECO:0007669"/>
    <property type="project" value="InterPro"/>
</dbReference>
<dbReference type="GO" id="GO:0045182">
    <property type="term" value="F:translation regulator activity"/>
    <property type="evidence" value="ECO:0007669"/>
    <property type="project" value="InterPro"/>
</dbReference>
<dbReference type="CDD" id="cd00200">
    <property type="entry name" value="WD40"/>
    <property type="match status" value="1"/>
</dbReference>
<dbReference type="FunFam" id="2.130.10.10:FF:000018">
    <property type="entry name" value="Receptor for activated C kinase 1"/>
    <property type="match status" value="1"/>
</dbReference>
<dbReference type="Gene3D" id="2.130.10.10">
    <property type="entry name" value="YVTN repeat-like/Quinoprotein amine dehydrogenase"/>
    <property type="match status" value="1"/>
</dbReference>
<dbReference type="InterPro" id="IPR020472">
    <property type="entry name" value="G-protein_beta_WD-40_rep"/>
</dbReference>
<dbReference type="InterPro" id="IPR045223">
    <property type="entry name" value="RACK1-like"/>
</dbReference>
<dbReference type="InterPro" id="IPR015943">
    <property type="entry name" value="WD40/YVTN_repeat-like_dom_sf"/>
</dbReference>
<dbReference type="InterPro" id="IPR019775">
    <property type="entry name" value="WD40_repeat_CS"/>
</dbReference>
<dbReference type="InterPro" id="IPR036322">
    <property type="entry name" value="WD40_repeat_dom_sf"/>
</dbReference>
<dbReference type="InterPro" id="IPR001680">
    <property type="entry name" value="WD40_rpt"/>
</dbReference>
<dbReference type="PANTHER" id="PTHR19868">
    <property type="entry name" value="RECEPTOR FOR ACTIVATED PROTEIN KINASE C RACK1"/>
    <property type="match status" value="1"/>
</dbReference>
<dbReference type="Pfam" id="PF00400">
    <property type="entry name" value="WD40"/>
    <property type="match status" value="6"/>
</dbReference>
<dbReference type="PRINTS" id="PR00320">
    <property type="entry name" value="GPROTEINBRPT"/>
</dbReference>
<dbReference type="SMART" id="SM00320">
    <property type="entry name" value="WD40"/>
    <property type="match status" value="7"/>
</dbReference>
<dbReference type="SUPFAM" id="SSF50978">
    <property type="entry name" value="WD40 repeat-like"/>
    <property type="match status" value="1"/>
</dbReference>
<dbReference type="PROSITE" id="PS00678">
    <property type="entry name" value="WD_REPEATS_1"/>
    <property type="match status" value="4"/>
</dbReference>
<dbReference type="PROSITE" id="PS50082">
    <property type="entry name" value="WD_REPEATS_2"/>
    <property type="match status" value="5"/>
</dbReference>
<dbReference type="PROSITE" id="PS50294">
    <property type="entry name" value="WD_REPEATS_REGION"/>
    <property type="match status" value="1"/>
</dbReference>
<keyword id="KW-0677">Repeat</keyword>
<keyword id="KW-0687">Ribonucleoprotein</keyword>
<keyword id="KW-0689">Ribosomal protein</keyword>
<keyword id="KW-0853">WD repeat</keyword>
<organism>
    <name type="scientific">Leishmania chagasi</name>
    <dbReference type="NCBI Taxonomy" id="44271"/>
    <lineage>
        <taxon>Eukaryota</taxon>
        <taxon>Discoba</taxon>
        <taxon>Euglenozoa</taxon>
        <taxon>Kinetoplastea</taxon>
        <taxon>Metakinetoplastina</taxon>
        <taxon>Trypanosomatida</taxon>
        <taxon>Trypanosomatidae</taxon>
        <taxon>Leishmaniinae</taxon>
        <taxon>Leishmania</taxon>
    </lineage>
</organism>
<proteinExistence type="evidence at transcript level"/>
<comment type="developmental stage">
    <text>Expressed in both stages of the parasite life cycle.</text>
</comment>
<comment type="similarity">
    <text evidence="1">Belongs to the WD repeat G protein beta family. Ribosomal protein RACK1 subfamily.</text>
</comment>
<accession>P62883</accession>
<accession>Q27434</accession>
<name>GBLP_LEICH</name>
<feature type="chain" id="PRO_0000127743" description="Small ribosomal subunit protein RACK1">
    <location>
        <begin position="1"/>
        <end position="312"/>
    </location>
</feature>
<feature type="repeat" description="WD 1">
    <location>
        <begin position="9"/>
        <end position="42"/>
    </location>
</feature>
<feature type="repeat" description="WD 2">
    <location>
        <begin position="63"/>
        <end position="93"/>
    </location>
</feature>
<feature type="repeat" description="WD 3">
    <location>
        <begin position="105"/>
        <end position="135"/>
    </location>
</feature>
<feature type="repeat" description="WD 4">
    <location>
        <begin position="148"/>
        <end position="180"/>
    </location>
</feature>
<feature type="repeat" description="WD 5">
    <location>
        <begin position="192"/>
        <end position="222"/>
    </location>
</feature>
<feature type="repeat" description="WD 6">
    <location>
        <begin position="233"/>
        <end position="262"/>
    </location>
</feature>
<feature type="repeat" description="WD 7">
    <location>
        <begin position="279"/>
        <end position="307"/>
    </location>
</feature>
<sequence length="312" mass="34373">MNYEGHLKGHRGWVTSLACPQQAGSYIKVVSTSRDGTAISWKANPDRHSVDSDYGLPSHRLEGHTGFVSCVSLAHATDYALTASWDRSIRMWDLRNGQCQRKFLKHTKDVLAVAFSPDDRLIVSAGRDNVIRVWNVAGECMHEFLRDGHEDWVSSICFSPSLEHPIVVSGSWDNTIKVWNVNGGKCERTLKGHSNYVSTVTVSPDGSLCASGGKDGAALLWDLSTGEQLFKINVESPINQIAFSPNRFWMCVATERSLSVYDLESKAVIAELTPDGAKPSECISIAWSADGNTLYSGHKDNLIRVWSISDAE</sequence>
<evidence type="ECO:0000305" key="1"/>
<reference key="1">
    <citation type="journal article" date="1995" name="Science">
        <title>Expression cloning of a protective Leishmania antigen.</title>
        <authorList>
            <person name="Mougneau E."/>
            <person name="Altare F."/>
            <person name="Wakil A.E."/>
            <person name="Zheng S."/>
            <person name="Coppola T."/>
            <person name="Wang Z.E."/>
            <person name="Waldmann R."/>
            <person name="Locksley R.M."/>
            <person name="Glaichenhaus N."/>
        </authorList>
    </citation>
    <scope>NUCLEOTIDE SEQUENCE [MRNA]</scope>
</reference>
<protein>
    <recommendedName>
        <fullName evidence="1">Small ribosomal subunit protein RACK1</fullName>
    </recommendedName>
    <alternativeName>
        <fullName>Antigen LACK</fullName>
    </alternativeName>
    <alternativeName>
        <fullName>Guanine nucleotide-binding protein subunit beta-like protein</fullName>
    </alternativeName>
</protein>